<protein>
    <recommendedName>
        <fullName evidence="1">Histidine--tRNA ligase</fullName>
        <ecNumber evidence="1">6.1.1.21</ecNumber>
    </recommendedName>
    <alternativeName>
        <fullName evidence="1">Histidyl-tRNA synthetase</fullName>
        <shortName evidence="1">HisRS</shortName>
    </alternativeName>
</protein>
<evidence type="ECO:0000255" key="1">
    <source>
        <dbReference type="HAMAP-Rule" id="MF_00127"/>
    </source>
</evidence>
<feature type="chain" id="PRO_1000016335" description="Histidine--tRNA ligase">
    <location>
        <begin position="1"/>
        <end position="410"/>
    </location>
</feature>
<name>SYH_CAMHC</name>
<comment type="catalytic activity">
    <reaction evidence="1">
        <text>tRNA(His) + L-histidine + ATP = L-histidyl-tRNA(His) + AMP + diphosphate + H(+)</text>
        <dbReference type="Rhea" id="RHEA:17313"/>
        <dbReference type="Rhea" id="RHEA-COMP:9665"/>
        <dbReference type="Rhea" id="RHEA-COMP:9689"/>
        <dbReference type="ChEBI" id="CHEBI:15378"/>
        <dbReference type="ChEBI" id="CHEBI:30616"/>
        <dbReference type="ChEBI" id="CHEBI:33019"/>
        <dbReference type="ChEBI" id="CHEBI:57595"/>
        <dbReference type="ChEBI" id="CHEBI:78442"/>
        <dbReference type="ChEBI" id="CHEBI:78527"/>
        <dbReference type="ChEBI" id="CHEBI:456215"/>
        <dbReference type="EC" id="6.1.1.21"/>
    </reaction>
</comment>
<comment type="subunit">
    <text evidence="1">Homodimer.</text>
</comment>
<comment type="subcellular location">
    <subcellularLocation>
        <location evidence="1">Cytoplasm</location>
    </subcellularLocation>
</comment>
<comment type="similarity">
    <text evidence="1">Belongs to the class-II aminoacyl-tRNA synthetase family.</text>
</comment>
<reference key="1">
    <citation type="submission" date="2007-07" db="EMBL/GenBank/DDBJ databases">
        <title>Complete genome sequence of Campylobacter hominis ATCC BAA-381, a commensal isolated from the human gastrointestinal tract.</title>
        <authorList>
            <person name="Fouts D.E."/>
            <person name="Mongodin E.F."/>
            <person name="Puiu D."/>
            <person name="Sebastian Y."/>
            <person name="Miller W.G."/>
            <person name="Mandrell R.E."/>
            <person name="Nelson K.E."/>
        </authorList>
    </citation>
    <scope>NUCLEOTIDE SEQUENCE [LARGE SCALE GENOMIC DNA]</scope>
    <source>
        <strain>ATCC BAA-381 / DSM 21671 / CCUG 45161 / LMG 19568 / NCTC 13146 / CH001A</strain>
    </source>
</reference>
<sequence>MIQALRGMNDMMDDEAKLYKKIIDVCEDTAKKYGYEYIEIPKLEETALFKRSVGESSDIVGKEMYQFTDKSGNDVCLRPEGTAGVVRAFIEHKMDRAGGVKKYFYHGSMFRYERPQKGRLREFHQFGIECFSEGSVYEDASVILMLSEILKKLDIEATLKINSLGDGDCMPKYREKLLKFLKENENELCSDCKRRISTNPIRVLDCKVEHCQKILQNAPLITENLNEICAGEFSKLQEILTANGVTFEVDPKLVRGLDYYTKTAFEFVSGEIGSQSAVGGGGRYDNLVAFLGGRPTFGVGFALGIERFMEILSSKESKQKRVGIYICALDKKYIDKIFKIGIDLRRNFKVEISYEAKNLQKHLKNADNKNAEIFLCMGENEAKNDELFMKNLIAKTNKNIKIAEILKEIR</sequence>
<organism>
    <name type="scientific">Campylobacter hominis (strain ATCC BAA-381 / DSM 21671 / CCUG 45161 / LMG 19568 / NCTC 13146 / CH001A)</name>
    <dbReference type="NCBI Taxonomy" id="360107"/>
    <lineage>
        <taxon>Bacteria</taxon>
        <taxon>Pseudomonadati</taxon>
        <taxon>Campylobacterota</taxon>
        <taxon>Epsilonproteobacteria</taxon>
        <taxon>Campylobacterales</taxon>
        <taxon>Campylobacteraceae</taxon>
        <taxon>Campylobacter</taxon>
    </lineage>
</organism>
<keyword id="KW-0030">Aminoacyl-tRNA synthetase</keyword>
<keyword id="KW-0067">ATP-binding</keyword>
<keyword id="KW-0963">Cytoplasm</keyword>
<keyword id="KW-0436">Ligase</keyword>
<keyword id="KW-0547">Nucleotide-binding</keyword>
<keyword id="KW-0648">Protein biosynthesis</keyword>
<keyword id="KW-1185">Reference proteome</keyword>
<dbReference type="EC" id="6.1.1.21" evidence="1"/>
<dbReference type="EMBL" id="CP000776">
    <property type="protein sequence ID" value="ABS51623.1"/>
    <property type="molecule type" value="Genomic_DNA"/>
</dbReference>
<dbReference type="RefSeq" id="WP_012108778.1">
    <property type="nucleotide sequence ID" value="NC_009714.1"/>
</dbReference>
<dbReference type="SMR" id="A7I1U5"/>
<dbReference type="STRING" id="360107.CHAB381_0925"/>
<dbReference type="KEGG" id="cha:CHAB381_0925"/>
<dbReference type="eggNOG" id="COG0124">
    <property type="taxonomic scope" value="Bacteria"/>
</dbReference>
<dbReference type="HOGENOM" id="CLU_025113_1_1_7"/>
<dbReference type="OrthoDB" id="9800814at2"/>
<dbReference type="Proteomes" id="UP000002407">
    <property type="component" value="Chromosome"/>
</dbReference>
<dbReference type="GO" id="GO:0005737">
    <property type="term" value="C:cytoplasm"/>
    <property type="evidence" value="ECO:0007669"/>
    <property type="project" value="UniProtKB-SubCell"/>
</dbReference>
<dbReference type="GO" id="GO:0005524">
    <property type="term" value="F:ATP binding"/>
    <property type="evidence" value="ECO:0007669"/>
    <property type="project" value="UniProtKB-UniRule"/>
</dbReference>
<dbReference type="GO" id="GO:0004821">
    <property type="term" value="F:histidine-tRNA ligase activity"/>
    <property type="evidence" value="ECO:0007669"/>
    <property type="project" value="UniProtKB-UniRule"/>
</dbReference>
<dbReference type="GO" id="GO:0006427">
    <property type="term" value="P:histidyl-tRNA aminoacylation"/>
    <property type="evidence" value="ECO:0007669"/>
    <property type="project" value="UniProtKB-UniRule"/>
</dbReference>
<dbReference type="CDD" id="cd00773">
    <property type="entry name" value="HisRS-like_core"/>
    <property type="match status" value="1"/>
</dbReference>
<dbReference type="Gene3D" id="3.40.50.800">
    <property type="entry name" value="Anticodon-binding domain"/>
    <property type="match status" value="1"/>
</dbReference>
<dbReference type="Gene3D" id="3.30.930.10">
    <property type="entry name" value="Bira Bifunctional Protein, Domain 2"/>
    <property type="match status" value="1"/>
</dbReference>
<dbReference type="HAMAP" id="MF_00127">
    <property type="entry name" value="His_tRNA_synth"/>
    <property type="match status" value="1"/>
</dbReference>
<dbReference type="InterPro" id="IPR006195">
    <property type="entry name" value="aa-tRNA-synth_II"/>
</dbReference>
<dbReference type="InterPro" id="IPR045864">
    <property type="entry name" value="aa-tRNA-synth_II/BPL/LPL"/>
</dbReference>
<dbReference type="InterPro" id="IPR004154">
    <property type="entry name" value="Anticodon-bd"/>
</dbReference>
<dbReference type="InterPro" id="IPR036621">
    <property type="entry name" value="Anticodon-bd_dom_sf"/>
</dbReference>
<dbReference type="InterPro" id="IPR015807">
    <property type="entry name" value="His-tRNA-ligase"/>
</dbReference>
<dbReference type="InterPro" id="IPR041715">
    <property type="entry name" value="HisRS-like_core"/>
</dbReference>
<dbReference type="InterPro" id="IPR004516">
    <property type="entry name" value="HisRS/HisZ"/>
</dbReference>
<dbReference type="NCBIfam" id="TIGR00442">
    <property type="entry name" value="hisS"/>
    <property type="match status" value="1"/>
</dbReference>
<dbReference type="PANTHER" id="PTHR43707:SF1">
    <property type="entry name" value="HISTIDINE--TRNA LIGASE, MITOCHONDRIAL-RELATED"/>
    <property type="match status" value="1"/>
</dbReference>
<dbReference type="PANTHER" id="PTHR43707">
    <property type="entry name" value="HISTIDYL-TRNA SYNTHETASE"/>
    <property type="match status" value="1"/>
</dbReference>
<dbReference type="Pfam" id="PF03129">
    <property type="entry name" value="HGTP_anticodon"/>
    <property type="match status" value="1"/>
</dbReference>
<dbReference type="Pfam" id="PF13393">
    <property type="entry name" value="tRNA-synt_His"/>
    <property type="match status" value="1"/>
</dbReference>
<dbReference type="PIRSF" id="PIRSF001549">
    <property type="entry name" value="His-tRNA_synth"/>
    <property type="match status" value="1"/>
</dbReference>
<dbReference type="SUPFAM" id="SSF52954">
    <property type="entry name" value="Class II aaRS ABD-related"/>
    <property type="match status" value="1"/>
</dbReference>
<dbReference type="SUPFAM" id="SSF55681">
    <property type="entry name" value="Class II aaRS and biotin synthetases"/>
    <property type="match status" value="1"/>
</dbReference>
<dbReference type="PROSITE" id="PS50862">
    <property type="entry name" value="AA_TRNA_LIGASE_II"/>
    <property type="match status" value="1"/>
</dbReference>
<proteinExistence type="inferred from homology"/>
<accession>A7I1U5</accession>
<gene>
    <name evidence="1" type="primary">hisS</name>
    <name type="ordered locus">CHAB381_0925</name>
</gene>